<reference key="1">
    <citation type="journal article" date="2005" name="Science">
        <title>Life at depth: Photobacterium profundum genome sequence and expression analysis.</title>
        <authorList>
            <person name="Vezzi A."/>
            <person name="Campanaro S."/>
            <person name="D'Angelo M."/>
            <person name="Simonato F."/>
            <person name="Vitulo N."/>
            <person name="Lauro F.M."/>
            <person name="Cestaro A."/>
            <person name="Malacrida G."/>
            <person name="Simionati B."/>
            <person name="Cannata N."/>
            <person name="Romualdi C."/>
            <person name="Bartlett D.H."/>
            <person name="Valle G."/>
        </authorList>
    </citation>
    <scope>NUCLEOTIDE SEQUENCE [LARGE SCALE GENOMIC DNA]</scope>
    <source>
        <strain>ATCC BAA-1253 / SS9</strain>
    </source>
</reference>
<accession>Q6LP47</accession>
<dbReference type="EMBL" id="CR378671">
    <property type="protein sequence ID" value="CAG20929.1"/>
    <property type="molecule type" value="Genomic_DNA"/>
</dbReference>
<dbReference type="RefSeq" id="WP_011219212.1">
    <property type="nucleotide sequence ID" value="NC_006370.1"/>
</dbReference>
<dbReference type="SMR" id="Q6LP47"/>
<dbReference type="STRING" id="298386.PBPRA2550"/>
<dbReference type="KEGG" id="ppr:PBPRA2550"/>
<dbReference type="eggNOG" id="COG0823">
    <property type="taxonomic scope" value="Bacteria"/>
</dbReference>
<dbReference type="HOGENOM" id="CLU_047123_0_0_6"/>
<dbReference type="Proteomes" id="UP000000593">
    <property type="component" value="Chromosome 1"/>
</dbReference>
<dbReference type="GO" id="GO:0042597">
    <property type="term" value="C:periplasmic space"/>
    <property type="evidence" value="ECO:0007669"/>
    <property type="project" value="UniProtKB-SubCell"/>
</dbReference>
<dbReference type="GO" id="GO:0051301">
    <property type="term" value="P:cell division"/>
    <property type="evidence" value="ECO:0007669"/>
    <property type="project" value="UniProtKB-UniRule"/>
</dbReference>
<dbReference type="GO" id="GO:0017038">
    <property type="term" value="P:protein import"/>
    <property type="evidence" value="ECO:0007669"/>
    <property type="project" value="InterPro"/>
</dbReference>
<dbReference type="Gene3D" id="2.120.10.30">
    <property type="entry name" value="TolB, C-terminal domain"/>
    <property type="match status" value="1"/>
</dbReference>
<dbReference type="Gene3D" id="3.40.50.10070">
    <property type="entry name" value="TolB, N-terminal domain"/>
    <property type="match status" value="1"/>
</dbReference>
<dbReference type="HAMAP" id="MF_00671">
    <property type="entry name" value="TolB"/>
    <property type="match status" value="1"/>
</dbReference>
<dbReference type="InterPro" id="IPR011042">
    <property type="entry name" value="6-blade_b-propeller_TolB-like"/>
</dbReference>
<dbReference type="InterPro" id="IPR011659">
    <property type="entry name" value="PD40"/>
</dbReference>
<dbReference type="InterPro" id="IPR014167">
    <property type="entry name" value="Tol-Pal_TolB"/>
</dbReference>
<dbReference type="InterPro" id="IPR007195">
    <property type="entry name" value="TolB_N"/>
</dbReference>
<dbReference type="NCBIfam" id="TIGR02800">
    <property type="entry name" value="propeller_TolB"/>
    <property type="match status" value="1"/>
</dbReference>
<dbReference type="PANTHER" id="PTHR36842:SF1">
    <property type="entry name" value="PROTEIN TOLB"/>
    <property type="match status" value="1"/>
</dbReference>
<dbReference type="PANTHER" id="PTHR36842">
    <property type="entry name" value="PROTEIN TOLB HOMOLOG"/>
    <property type="match status" value="1"/>
</dbReference>
<dbReference type="Pfam" id="PF07676">
    <property type="entry name" value="PD40"/>
    <property type="match status" value="3"/>
</dbReference>
<dbReference type="Pfam" id="PF04052">
    <property type="entry name" value="TolB_N"/>
    <property type="match status" value="1"/>
</dbReference>
<dbReference type="SUPFAM" id="SSF52964">
    <property type="entry name" value="TolB, N-terminal domain"/>
    <property type="match status" value="1"/>
</dbReference>
<dbReference type="SUPFAM" id="SSF69304">
    <property type="entry name" value="Tricorn protease N-terminal domain"/>
    <property type="match status" value="1"/>
</dbReference>
<keyword id="KW-0131">Cell cycle</keyword>
<keyword id="KW-0132">Cell division</keyword>
<keyword id="KW-0574">Periplasm</keyword>
<keyword id="KW-1185">Reference proteome</keyword>
<keyword id="KW-0732">Signal</keyword>
<comment type="function">
    <text evidence="1">Part of the Tol-Pal system, which plays a role in outer membrane invagination during cell division and is important for maintaining outer membrane integrity.</text>
</comment>
<comment type="subunit">
    <text evidence="1">The Tol-Pal system is composed of five core proteins: the inner membrane proteins TolA, TolQ and TolR, the periplasmic protein TolB and the outer membrane protein Pal. They form a network linking the inner and outer membranes and the peptidoglycan layer.</text>
</comment>
<comment type="subcellular location">
    <subcellularLocation>
        <location evidence="1">Periplasm</location>
    </subcellularLocation>
</comment>
<comment type="similarity">
    <text evidence="1">Belongs to the TolB family.</text>
</comment>
<sequence length="449" mass="49781">MMKRWMMGLCIALLSFSQIAQAELELVITEGIDSARPIGIIPFTWEGEGKLPTDISSVIASDLQRSGKFSPIATSKMPQTPDSEEQIDYRAWTAMGVDALVTGKVTKNAEGNYVVNYQLVDVVRGQLTSGESRGLANGELVLTKDHLLVNNRAIVKETRLRQYAHRISDVVYEALTGEQGAFLTRIAYVVIDDKSKHPYQLRVADYDGFNERLVLKSRQPLMSPAWSPDGSKLAYVSFENQQAQIYIMDIYKGTRELVTSYPRHNGSPRFSPDGKKLALVLSKTGSLQIYIKDLKTKKLTQITSGRANNTEAFWDPDGKSLIFTSDRGGQPQIYRVNLADNSTKRLTWQGSQNLGGQLTPDGRYLVMVNRSDTGFNIAKQDLKTGAVQILTKTFLDESPSIAPNGGMVIYSSVNNKSNELSLVSIDGRFKARLPTTNGRVRAPSWGPFL</sequence>
<name>TOLB_PHOPR</name>
<protein>
    <recommendedName>
        <fullName evidence="1">Tol-Pal system protein TolB</fullName>
    </recommendedName>
</protein>
<proteinExistence type="inferred from homology"/>
<feature type="signal peptide" evidence="1">
    <location>
        <begin position="1"/>
        <end position="22"/>
    </location>
</feature>
<feature type="chain" id="PRO_0000034671" description="Tol-Pal system protein TolB" evidence="1">
    <location>
        <begin position="23"/>
        <end position="449"/>
    </location>
</feature>
<gene>
    <name evidence="1" type="primary">tolB</name>
    <name type="ordered locus">PBPRA2550</name>
</gene>
<evidence type="ECO:0000255" key="1">
    <source>
        <dbReference type="HAMAP-Rule" id="MF_00671"/>
    </source>
</evidence>
<organism>
    <name type="scientific">Photobacterium profundum (strain SS9)</name>
    <dbReference type="NCBI Taxonomy" id="298386"/>
    <lineage>
        <taxon>Bacteria</taxon>
        <taxon>Pseudomonadati</taxon>
        <taxon>Pseudomonadota</taxon>
        <taxon>Gammaproteobacteria</taxon>
        <taxon>Vibrionales</taxon>
        <taxon>Vibrionaceae</taxon>
        <taxon>Photobacterium</taxon>
    </lineage>
</organism>